<gene>
    <name type="primary">Txndc17</name>
    <name type="synonym">Txnl5</name>
</gene>
<protein>
    <recommendedName>
        <fullName>Thioredoxin domain-containing protein 17</fullName>
    </recommendedName>
    <alternativeName>
        <fullName>14 kDa thioredoxin-related protein</fullName>
        <shortName>TRP14</shortName>
    </alternativeName>
    <alternativeName>
        <fullName>Protein 42-9-9</fullName>
    </alternativeName>
    <alternativeName>
        <fullName>Thioredoxin-like protein 5</fullName>
    </alternativeName>
</protein>
<evidence type="ECO:0000250" key="1"/>
<evidence type="ECO:0000250" key="2">
    <source>
        <dbReference type="UniProtKB" id="Q9BRA2"/>
    </source>
</evidence>
<evidence type="ECO:0000255" key="3"/>
<evidence type="ECO:0000305" key="4"/>
<evidence type="ECO:0007829" key="5">
    <source>
        <dbReference type="PDB" id="1V9W"/>
    </source>
</evidence>
<organism>
    <name type="scientific">Mus musculus</name>
    <name type="common">Mouse</name>
    <dbReference type="NCBI Taxonomy" id="10090"/>
    <lineage>
        <taxon>Eukaryota</taxon>
        <taxon>Metazoa</taxon>
        <taxon>Chordata</taxon>
        <taxon>Craniata</taxon>
        <taxon>Vertebrata</taxon>
        <taxon>Euteleostomi</taxon>
        <taxon>Mammalia</taxon>
        <taxon>Eutheria</taxon>
        <taxon>Euarchontoglires</taxon>
        <taxon>Glires</taxon>
        <taxon>Rodentia</taxon>
        <taxon>Myomorpha</taxon>
        <taxon>Muroidea</taxon>
        <taxon>Muridae</taxon>
        <taxon>Murinae</taxon>
        <taxon>Mus</taxon>
        <taxon>Mus</taxon>
    </lineage>
</organism>
<reference key="1">
    <citation type="thesis" date="2001" institute="University of Goettingen" country="Germany">
        <authorList>
            <person name="Schmidt T."/>
        </authorList>
    </citation>
    <scope>NUCLEOTIDE SEQUENCE [MRNA]</scope>
    <source>
        <tissue>Embryo</tissue>
    </source>
</reference>
<reference key="2">
    <citation type="journal article" date="2005" name="Science">
        <title>The transcriptional landscape of the mammalian genome.</title>
        <authorList>
            <person name="Carninci P."/>
            <person name="Kasukawa T."/>
            <person name="Katayama S."/>
            <person name="Gough J."/>
            <person name="Frith M.C."/>
            <person name="Maeda N."/>
            <person name="Oyama R."/>
            <person name="Ravasi T."/>
            <person name="Lenhard B."/>
            <person name="Wells C."/>
            <person name="Kodzius R."/>
            <person name="Shimokawa K."/>
            <person name="Bajic V.B."/>
            <person name="Brenner S.E."/>
            <person name="Batalov S."/>
            <person name="Forrest A.R."/>
            <person name="Zavolan M."/>
            <person name="Davis M.J."/>
            <person name="Wilming L.G."/>
            <person name="Aidinis V."/>
            <person name="Allen J.E."/>
            <person name="Ambesi-Impiombato A."/>
            <person name="Apweiler R."/>
            <person name="Aturaliya R.N."/>
            <person name="Bailey T.L."/>
            <person name="Bansal M."/>
            <person name="Baxter L."/>
            <person name="Beisel K.W."/>
            <person name="Bersano T."/>
            <person name="Bono H."/>
            <person name="Chalk A.M."/>
            <person name="Chiu K.P."/>
            <person name="Choudhary V."/>
            <person name="Christoffels A."/>
            <person name="Clutterbuck D.R."/>
            <person name="Crowe M.L."/>
            <person name="Dalla E."/>
            <person name="Dalrymple B.P."/>
            <person name="de Bono B."/>
            <person name="Della Gatta G."/>
            <person name="di Bernardo D."/>
            <person name="Down T."/>
            <person name="Engstrom P."/>
            <person name="Fagiolini M."/>
            <person name="Faulkner G."/>
            <person name="Fletcher C.F."/>
            <person name="Fukushima T."/>
            <person name="Furuno M."/>
            <person name="Futaki S."/>
            <person name="Gariboldi M."/>
            <person name="Georgii-Hemming P."/>
            <person name="Gingeras T.R."/>
            <person name="Gojobori T."/>
            <person name="Green R.E."/>
            <person name="Gustincich S."/>
            <person name="Harbers M."/>
            <person name="Hayashi Y."/>
            <person name="Hensch T.K."/>
            <person name="Hirokawa N."/>
            <person name="Hill D."/>
            <person name="Huminiecki L."/>
            <person name="Iacono M."/>
            <person name="Ikeo K."/>
            <person name="Iwama A."/>
            <person name="Ishikawa T."/>
            <person name="Jakt M."/>
            <person name="Kanapin A."/>
            <person name="Katoh M."/>
            <person name="Kawasawa Y."/>
            <person name="Kelso J."/>
            <person name="Kitamura H."/>
            <person name="Kitano H."/>
            <person name="Kollias G."/>
            <person name="Krishnan S.P."/>
            <person name="Kruger A."/>
            <person name="Kummerfeld S.K."/>
            <person name="Kurochkin I.V."/>
            <person name="Lareau L.F."/>
            <person name="Lazarevic D."/>
            <person name="Lipovich L."/>
            <person name="Liu J."/>
            <person name="Liuni S."/>
            <person name="McWilliam S."/>
            <person name="Madan Babu M."/>
            <person name="Madera M."/>
            <person name="Marchionni L."/>
            <person name="Matsuda H."/>
            <person name="Matsuzawa S."/>
            <person name="Miki H."/>
            <person name="Mignone F."/>
            <person name="Miyake S."/>
            <person name="Morris K."/>
            <person name="Mottagui-Tabar S."/>
            <person name="Mulder N."/>
            <person name="Nakano N."/>
            <person name="Nakauchi H."/>
            <person name="Ng P."/>
            <person name="Nilsson R."/>
            <person name="Nishiguchi S."/>
            <person name="Nishikawa S."/>
            <person name="Nori F."/>
            <person name="Ohara O."/>
            <person name="Okazaki Y."/>
            <person name="Orlando V."/>
            <person name="Pang K.C."/>
            <person name="Pavan W.J."/>
            <person name="Pavesi G."/>
            <person name="Pesole G."/>
            <person name="Petrovsky N."/>
            <person name="Piazza S."/>
            <person name="Reed J."/>
            <person name="Reid J.F."/>
            <person name="Ring B.Z."/>
            <person name="Ringwald M."/>
            <person name="Rost B."/>
            <person name="Ruan Y."/>
            <person name="Salzberg S.L."/>
            <person name="Sandelin A."/>
            <person name="Schneider C."/>
            <person name="Schoenbach C."/>
            <person name="Sekiguchi K."/>
            <person name="Semple C.A."/>
            <person name="Seno S."/>
            <person name="Sessa L."/>
            <person name="Sheng Y."/>
            <person name="Shibata Y."/>
            <person name="Shimada H."/>
            <person name="Shimada K."/>
            <person name="Silva D."/>
            <person name="Sinclair B."/>
            <person name="Sperling S."/>
            <person name="Stupka E."/>
            <person name="Sugiura K."/>
            <person name="Sultana R."/>
            <person name="Takenaka Y."/>
            <person name="Taki K."/>
            <person name="Tammoja K."/>
            <person name="Tan S.L."/>
            <person name="Tang S."/>
            <person name="Taylor M.S."/>
            <person name="Tegner J."/>
            <person name="Teichmann S.A."/>
            <person name="Ueda H.R."/>
            <person name="van Nimwegen E."/>
            <person name="Verardo R."/>
            <person name="Wei C.L."/>
            <person name="Yagi K."/>
            <person name="Yamanishi H."/>
            <person name="Zabarovsky E."/>
            <person name="Zhu S."/>
            <person name="Zimmer A."/>
            <person name="Hide W."/>
            <person name="Bult C."/>
            <person name="Grimmond S.M."/>
            <person name="Teasdale R.D."/>
            <person name="Liu E.T."/>
            <person name="Brusic V."/>
            <person name="Quackenbush J."/>
            <person name="Wahlestedt C."/>
            <person name="Mattick J.S."/>
            <person name="Hume D.A."/>
            <person name="Kai C."/>
            <person name="Sasaki D."/>
            <person name="Tomaru Y."/>
            <person name="Fukuda S."/>
            <person name="Kanamori-Katayama M."/>
            <person name="Suzuki M."/>
            <person name="Aoki J."/>
            <person name="Arakawa T."/>
            <person name="Iida J."/>
            <person name="Imamura K."/>
            <person name="Itoh M."/>
            <person name="Kato T."/>
            <person name="Kawaji H."/>
            <person name="Kawagashira N."/>
            <person name="Kawashima T."/>
            <person name="Kojima M."/>
            <person name="Kondo S."/>
            <person name="Konno H."/>
            <person name="Nakano K."/>
            <person name="Ninomiya N."/>
            <person name="Nishio T."/>
            <person name="Okada M."/>
            <person name="Plessy C."/>
            <person name="Shibata K."/>
            <person name="Shiraki T."/>
            <person name="Suzuki S."/>
            <person name="Tagami M."/>
            <person name="Waki K."/>
            <person name="Watahiki A."/>
            <person name="Okamura-Oho Y."/>
            <person name="Suzuki H."/>
            <person name="Kawai J."/>
            <person name="Hayashizaki Y."/>
        </authorList>
    </citation>
    <scope>NUCLEOTIDE SEQUENCE [LARGE SCALE MRNA]</scope>
    <source>
        <strain>C57BL/6J</strain>
        <tissue>Dendritic cell</tissue>
        <tissue>Embryo</tissue>
        <tissue>Head</tissue>
        <tissue>Pancreas</tissue>
    </source>
</reference>
<reference key="3">
    <citation type="journal article" date="2009" name="PLoS Biol.">
        <title>Lineage-specific biology revealed by a finished genome assembly of the mouse.</title>
        <authorList>
            <person name="Church D.M."/>
            <person name="Goodstadt L."/>
            <person name="Hillier L.W."/>
            <person name="Zody M.C."/>
            <person name="Goldstein S."/>
            <person name="She X."/>
            <person name="Bult C.J."/>
            <person name="Agarwala R."/>
            <person name="Cherry J.L."/>
            <person name="DiCuccio M."/>
            <person name="Hlavina W."/>
            <person name="Kapustin Y."/>
            <person name="Meric P."/>
            <person name="Maglott D."/>
            <person name="Birtle Z."/>
            <person name="Marques A.C."/>
            <person name="Graves T."/>
            <person name="Zhou S."/>
            <person name="Teague B."/>
            <person name="Potamousis K."/>
            <person name="Churas C."/>
            <person name="Place M."/>
            <person name="Herschleb J."/>
            <person name="Runnheim R."/>
            <person name="Forrest D."/>
            <person name="Amos-Landgraf J."/>
            <person name="Schwartz D.C."/>
            <person name="Cheng Z."/>
            <person name="Lindblad-Toh K."/>
            <person name="Eichler E.E."/>
            <person name="Ponting C.P."/>
        </authorList>
    </citation>
    <scope>NUCLEOTIDE SEQUENCE [LARGE SCALE GENOMIC DNA]</scope>
    <source>
        <strain>C57BL/6J</strain>
    </source>
</reference>
<reference key="4">
    <citation type="journal article" date="2004" name="Genome Res.">
        <title>The status, quality, and expansion of the NIH full-length cDNA project: the Mammalian Gene Collection (MGC).</title>
        <authorList>
            <consortium name="The MGC Project Team"/>
        </authorList>
    </citation>
    <scope>NUCLEOTIDE SEQUENCE [LARGE SCALE MRNA]</scope>
    <source>
        <strain>FVB/N</strain>
        <tissue>Mammary tumor</tissue>
    </source>
</reference>
<reference key="5">
    <citation type="journal article" date="2010" name="Cell">
        <title>A tissue-specific atlas of mouse protein phosphorylation and expression.</title>
        <authorList>
            <person name="Huttlin E.L."/>
            <person name="Jedrychowski M.P."/>
            <person name="Elias J.E."/>
            <person name="Goswami T."/>
            <person name="Rad R."/>
            <person name="Beausoleil S.A."/>
            <person name="Villen J."/>
            <person name="Haas W."/>
            <person name="Sowa M.E."/>
            <person name="Gygi S.P."/>
        </authorList>
    </citation>
    <scope>IDENTIFICATION BY MASS SPECTROMETRY [LARGE SCALE ANALYSIS]</scope>
    <source>
        <tissue>Brain</tissue>
        <tissue>Brown adipose tissue</tissue>
        <tissue>Heart</tissue>
        <tissue>Kidney</tissue>
        <tissue>Liver</tissue>
        <tissue>Lung</tissue>
        <tissue>Pancreas</tissue>
        <tissue>Spleen</tissue>
        <tissue>Testis</tissue>
    </source>
</reference>
<reference key="6">
    <citation type="submission" date="2004-08" db="PDB data bank">
        <title>Solution structure of mouse putative 42-9-9 protein.</title>
        <authorList>
            <consortium name="RIKEN structural genomics initiative (RSGI)"/>
        </authorList>
    </citation>
    <scope>STRUCTURE BY NMR</scope>
</reference>
<sequence>MATFEEVSVLGFEEFDKAVKEHEGKTIFAYFSGSKDTEGKSWCPDCVEAEPVIREGLKHVTEDCVFIYCQVGDKPYWKDPNNDFRQKLKITAVPTLLKYGTPQKLVESECCQSSLVEMIFSED</sequence>
<keyword id="KW-0002">3D-structure</keyword>
<keyword id="KW-0007">Acetylation</keyword>
<keyword id="KW-0963">Cytoplasm</keyword>
<keyword id="KW-1015">Disulfide bond</keyword>
<keyword id="KW-0676">Redox-active center</keyword>
<keyword id="KW-1185">Reference proteome</keyword>
<name>TXD17_MOUSE</name>
<comment type="function">
    <text evidence="1">Disulfide reductase. May participate in various redox reactions through the reversible oxidation of its active center dithiol to a disulfide and catalyze dithiol-disulfide exchange reactions. Modulates TNF-alpha signaling and NF-kappa-B activation. Has peroxidase activity and may contribute to the elimination of cellular hydrogen peroxide (By similarity).</text>
</comment>
<comment type="subunit">
    <text evidence="1">Interacts with TRXR1 and DYNLL1/DNCL1.</text>
</comment>
<comment type="subcellular location">
    <subcellularLocation>
        <location evidence="1">Cytoplasm</location>
    </subcellularLocation>
</comment>
<comment type="PTM">
    <text evidence="1">The oxidized protein is reduced by TRXR1.</text>
</comment>
<comment type="similarity">
    <text evidence="4">Belongs to the thioredoxin family.</text>
</comment>
<dbReference type="EMBL" id="AJ344103">
    <property type="protein sequence ID" value="CAC51438.1"/>
    <property type="molecule type" value="mRNA"/>
</dbReference>
<dbReference type="EMBL" id="AK004219">
    <property type="protein sequence ID" value="BAB23225.1"/>
    <property type="molecule type" value="mRNA"/>
</dbReference>
<dbReference type="EMBL" id="AK007595">
    <property type="protein sequence ID" value="BAB25126.1"/>
    <property type="molecule type" value="mRNA"/>
</dbReference>
<dbReference type="EMBL" id="AK013103">
    <property type="protein sequence ID" value="BAB28648.1"/>
    <property type="molecule type" value="mRNA"/>
</dbReference>
<dbReference type="EMBL" id="AK076425">
    <property type="protein sequence ID" value="BAC36336.1"/>
    <property type="molecule type" value="mRNA"/>
</dbReference>
<dbReference type="EMBL" id="AK169882">
    <property type="protein sequence ID" value="BAE41434.1"/>
    <property type="molecule type" value="mRNA"/>
</dbReference>
<dbReference type="EMBL" id="BX119911">
    <property type="status" value="NOT_ANNOTATED_CDS"/>
    <property type="molecule type" value="Genomic_DNA"/>
</dbReference>
<dbReference type="EMBL" id="BC030344">
    <property type="protein sequence ID" value="AAH30344.1"/>
    <property type="molecule type" value="mRNA"/>
</dbReference>
<dbReference type="CCDS" id="CCDS24980.1"/>
<dbReference type="RefSeq" id="NP_080835.1">
    <property type="nucleotide sequence ID" value="NM_026559.3"/>
</dbReference>
<dbReference type="PDB" id="1V9W">
    <property type="method" value="NMR"/>
    <property type="chains" value="A=1-123"/>
</dbReference>
<dbReference type="PDBsum" id="1V9W"/>
<dbReference type="BMRB" id="Q9CQM5"/>
<dbReference type="SMR" id="Q9CQM5"/>
<dbReference type="BioGRID" id="206741">
    <property type="interactions" value="5"/>
</dbReference>
<dbReference type="FunCoup" id="Q9CQM5">
    <property type="interactions" value="1782"/>
</dbReference>
<dbReference type="STRING" id="10090.ENSMUSP00000021158"/>
<dbReference type="GlyGen" id="Q9CQM5">
    <property type="glycosylation" value="1 site, 1 O-linked glycan (1 site)"/>
</dbReference>
<dbReference type="iPTMnet" id="Q9CQM5"/>
<dbReference type="PhosphoSitePlus" id="Q9CQM5"/>
<dbReference type="SwissPalm" id="Q9CQM5"/>
<dbReference type="CPTAC" id="non-CPTAC-3677"/>
<dbReference type="jPOST" id="Q9CQM5"/>
<dbReference type="PaxDb" id="10090-ENSMUSP00000021158"/>
<dbReference type="PeptideAtlas" id="Q9CQM5"/>
<dbReference type="ProteomicsDB" id="298342"/>
<dbReference type="Pumba" id="Q9CQM5"/>
<dbReference type="Antibodypedia" id="11673">
    <property type="antibodies" value="86 antibodies from 25 providers"/>
</dbReference>
<dbReference type="DNASU" id="52700"/>
<dbReference type="Ensembl" id="ENSMUST00000021158.4">
    <property type="protein sequence ID" value="ENSMUSP00000021158.4"/>
    <property type="gene ID" value="ENSMUSG00000020803.4"/>
</dbReference>
<dbReference type="GeneID" id="52700"/>
<dbReference type="KEGG" id="mmu:52700"/>
<dbReference type="UCSC" id="uc007jyj.1">
    <property type="organism name" value="mouse"/>
</dbReference>
<dbReference type="AGR" id="MGI:1289248"/>
<dbReference type="CTD" id="84817"/>
<dbReference type="MGI" id="MGI:1289248">
    <property type="gene designation" value="Txndc17"/>
</dbReference>
<dbReference type="VEuPathDB" id="HostDB:ENSMUSG00000020803"/>
<dbReference type="eggNOG" id="KOG3425">
    <property type="taxonomic scope" value="Eukaryota"/>
</dbReference>
<dbReference type="GeneTree" id="ENSGT00390000012195"/>
<dbReference type="HOGENOM" id="CLU_120161_0_1_1"/>
<dbReference type="InParanoid" id="Q9CQM5"/>
<dbReference type="OMA" id="PRDYWKN"/>
<dbReference type="OrthoDB" id="78947at2759"/>
<dbReference type="PhylomeDB" id="Q9CQM5"/>
<dbReference type="TreeFam" id="TF313854"/>
<dbReference type="BioGRID-ORCS" id="52700">
    <property type="hits" value="19 hits in 77 CRISPR screens"/>
</dbReference>
<dbReference type="ChiTaRS" id="Txndc17">
    <property type="organism name" value="mouse"/>
</dbReference>
<dbReference type="EvolutionaryTrace" id="Q9CQM5"/>
<dbReference type="PRO" id="PR:Q9CQM5"/>
<dbReference type="Proteomes" id="UP000000589">
    <property type="component" value="Chromosome 11"/>
</dbReference>
<dbReference type="RNAct" id="Q9CQM5">
    <property type="molecule type" value="protein"/>
</dbReference>
<dbReference type="Bgee" id="ENSMUSG00000020803">
    <property type="expression patterns" value="Expressed in seminal vesicle and 257 other cell types or tissues"/>
</dbReference>
<dbReference type="GO" id="GO:0005829">
    <property type="term" value="C:cytosol"/>
    <property type="evidence" value="ECO:0007669"/>
    <property type="project" value="Ensembl"/>
</dbReference>
<dbReference type="GO" id="GO:0004601">
    <property type="term" value="F:peroxidase activity"/>
    <property type="evidence" value="ECO:0007669"/>
    <property type="project" value="Ensembl"/>
</dbReference>
<dbReference type="GO" id="GO:0047134">
    <property type="term" value="F:protein-disulfide reductase [NAD(P)H] activity"/>
    <property type="evidence" value="ECO:0007669"/>
    <property type="project" value="Ensembl"/>
</dbReference>
<dbReference type="GO" id="GO:0033209">
    <property type="term" value="P:tumor necrosis factor-mediated signaling pathway"/>
    <property type="evidence" value="ECO:0007669"/>
    <property type="project" value="Ensembl"/>
</dbReference>
<dbReference type="CDD" id="cd02952">
    <property type="entry name" value="TRP14_like"/>
    <property type="match status" value="1"/>
</dbReference>
<dbReference type="FunFam" id="3.40.30.10:FF:000124">
    <property type="entry name" value="Thioredoxin domain-containing 17"/>
    <property type="match status" value="1"/>
</dbReference>
<dbReference type="Gene3D" id="3.40.30.10">
    <property type="entry name" value="Glutaredoxin"/>
    <property type="match status" value="1"/>
</dbReference>
<dbReference type="InterPro" id="IPR036249">
    <property type="entry name" value="Thioredoxin-like_sf"/>
</dbReference>
<dbReference type="InterPro" id="IPR045108">
    <property type="entry name" value="TXNDC17-like"/>
</dbReference>
<dbReference type="InterPro" id="IPR010357">
    <property type="entry name" value="TXNDC17_dom"/>
</dbReference>
<dbReference type="PANTHER" id="PTHR12452">
    <property type="entry name" value="42-9-9 PROTEIN-RELATED"/>
    <property type="match status" value="1"/>
</dbReference>
<dbReference type="PANTHER" id="PTHR12452:SF0">
    <property type="entry name" value="THIOREDOXIN DOMAIN-CONTAINING PROTEIN 17"/>
    <property type="match status" value="1"/>
</dbReference>
<dbReference type="Pfam" id="PF06110">
    <property type="entry name" value="TXD17-like_Trx"/>
    <property type="match status" value="1"/>
</dbReference>
<dbReference type="SUPFAM" id="SSF52833">
    <property type="entry name" value="Thioredoxin-like"/>
    <property type="match status" value="1"/>
</dbReference>
<proteinExistence type="evidence at protein level"/>
<feature type="initiator methionine" description="Removed" evidence="2">
    <location>
        <position position="1"/>
    </location>
</feature>
<feature type="chain" id="PRO_0000120023" description="Thioredoxin domain-containing protein 17">
    <location>
        <begin position="2"/>
        <end position="123"/>
    </location>
</feature>
<feature type="domain" description="Thioredoxin" evidence="3">
    <location>
        <begin position="41"/>
        <end position="123"/>
    </location>
</feature>
<feature type="active site" description="Nucleophile" evidence="2">
    <location>
        <position position="43"/>
    </location>
</feature>
<feature type="active site" description="Nucleophile" evidence="2">
    <location>
        <position position="46"/>
    </location>
</feature>
<feature type="site" description="Contributes to redox potential value" evidence="2">
    <location>
        <position position="44"/>
    </location>
</feature>
<feature type="site" description="Contributes to redox potential value" evidence="2">
    <location>
        <position position="45"/>
    </location>
</feature>
<feature type="modified residue" description="N-acetylalanine" evidence="2">
    <location>
        <position position="2"/>
    </location>
</feature>
<feature type="disulfide bond" description="Redox-active" evidence="2">
    <location>
        <begin position="43"/>
        <end position="46"/>
    </location>
</feature>
<feature type="sequence conflict" description="In Ref. 2; BAE41434." evidence="4" ref="2">
    <original>H</original>
    <variation>R</variation>
    <location>
        <position position="22"/>
    </location>
</feature>
<feature type="sequence conflict" description="In Ref. 2; BAB23225." evidence="4" ref="2">
    <original>G</original>
    <variation>S</variation>
    <location>
        <position position="24"/>
    </location>
</feature>
<feature type="sequence conflict" description="In Ref. 1; CAC51438." evidence="4" ref="1">
    <original>K</original>
    <variation>Q</variation>
    <location>
        <position position="40"/>
    </location>
</feature>
<feature type="sequence conflict" description="In Ref. 2; BAE41434." evidence="4" ref="2">
    <original>Y</original>
    <variation>H</variation>
    <location>
        <position position="76"/>
    </location>
</feature>
<feature type="strand" evidence="5">
    <location>
        <begin position="4"/>
        <end position="10"/>
    </location>
</feature>
<feature type="helix" evidence="5">
    <location>
        <begin position="11"/>
        <end position="21"/>
    </location>
</feature>
<feature type="strand" evidence="5">
    <location>
        <begin position="23"/>
        <end position="32"/>
    </location>
</feature>
<feature type="strand" evidence="5">
    <location>
        <begin position="41"/>
        <end position="43"/>
    </location>
</feature>
<feature type="helix" evidence="5">
    <location>
        <begin position="44"/>
        <end position="59"/>
    </location>
</feature>
<feature type="strand" evidence="5">
    <location>
        <begin position="64"/>
        <end position="70"/>
    </location>
</feature>
<feature type="helix" evidence="5">
    <location>
        <begin position="74"/>
        <end position="77"/>
    </location>
</feature>
<feature type="helix" evidence="5">
    <location>
        <begin position="83"/>
        <end position="86"/>
    </location>
</feature>
<feature type="strand" evidence="5">
    <location>
        <begin position="92"/>
        <end position="99"/>
    </location>
</feature>
<feature type="helix" evidence="5">
    <location>
        <begin position="107"/>
        <end position="111"/>
    </location>
</feature>
<feature type="helix" evidence="5">
    <location>
        <begin position="113"/>
        <end position="121"/>
    </location>
</feature>
<accession>Q9CQM5</accession>
<accession>Q3TE14</accession>
<accession>Q921A9</accession>
<accession>Q9D0Y4</accession>